<gene>
    <name type="primary">iws1</name>
    <name type="ORF">AN1065</name>
</gene>
<organism>
    <name type="scientific">Emericella nidulans (strain FGSC A4 / ATCC 38163 / CBS 112.46 / NRRL 194 / M139)</name>
    <name type="common">Aspergillus nidulans</name>
    <dbReference type="NCBI Taxonomy" id="227321"/>
    <lineage>
        <taxon>Eukaryota</taxon>
        <taxon>Fungi</taxon>
        <taxon>Dikarya</taxon>
        <taxon>Ascomycota</taxon>
        <taxon>Pezizomycotina</taxon>
        <taxon>Eurotiomycetes</taxon>
        <taxon>Eurotiomycetidae</taxon>
        <taxon>Eurotiales</taxon>
        <taxon>Aspergillaceae</taxon>
        <taxon>Aspergillus</taxon>
        <taxon>Aspergillus subgen. Nidulantes</taxon>
    </lineage>
</organism>
<keyword id="KW-0539">Nucleus</keyword>
<keyword id="KW-1185">Reference proteome</keyword>
<keyword id="KW-0804">Transcription</keyword>
<keyword id="KW-0805">Transcription regulation</keyword>
<dbReference type="EMBL" id="AACD01000016">
    <property type="protein sequence ID" value="EAA66183.1"/>
    <property type="status" value="ALT_SEQ"/>
    <property type="molecule type" value="Genomic_DNA"/>
</dbReference>
<dbReference type="EMBL" id="BN001308">
    <property type="protein sequence ID" value="CBF88223.1"/>
    <property type="molecule type" value="Genomic_DNA"/>
</dbReference>
<dbReference type="RefSeq" id="XP_658669.1">
    <property type="nucleotide sequence ID" value="XM_653577.1"/>
</dbReference>
<dbReference type="SMR" id="Q5BEG5"/>
<dbReference type="STRING" id="227321.Q5BEG5"/>
<dbReference type="EnsemblFungi" id="CBF88223">
    <property type="protein sequence ID" value="CBF88223"/>
    <property type="gene ID" value="ANIA_01065"/>
</dbReference>
<dbReference type="eggNOG" id="KOG1793">
    <property type="taxonomic scope" value="Eukaryota"/>
</dbReference>
<dbReference type="HOGENOM" id="CLU_045275_1_0_1"/>
<dbReference type="InParanoid" id="Q5BEG5"/>
<dbReference type="OMA" id="MPAYNIQ"/>
<dbReference type="OrthoDB" id="21124at2759"/>
<dbReference type="Proteomes" id="UP000000560">
    <property type="component" value="Chromosome VIII"/>
</dbReference>
<dbReference type="GO" id="GO:0005634">
    <property type="term" value="C:nucleus"/>
    <property type="evidence" value="ECO:0000318"/>
    <property type="project" value="GO_Central"/>
</dbReference>
<dbReference type="GO" id="GO:0016973">
    <property type="term" value="P:poly(A)+ mRNA export from nucleus"/>
    <property type="evidence" value="ECO:0000318"/>
    <property type="project" value="GO_Central"/>
</dbReference>
<dbReference type="FunFam" id="1.20.930.10:FF:000003">
    <property type="entry name" value="Putative Transcription factor IWS1"/>
    <property type="match status" value="1"/>
</dbReference>
<dbReference type="Gene3D" id="1.20.930.10">
    <property type="entry name" value="Conserved domain common to transcription factors TFIIS, elongin A, CRSP70"/>
    <property type="match status" value="1"/>
</dbReference>
<dbReference type="InterPro" id="IPR051037">
    <property type="entry name" value="RNAPII_TF_IWS1"/>
</dbReference>
<dbReference type="InterPro" id="IPR035441">
    <property type="entry name" value="TFIIS/LEDGF_dom_sf"/>
</dbReference>
<dbReference type="InterPro" id="IPR017923">
    <property type="entry name" value="TFIIS_N"/>
</dbReference>
<dbReference type="PANTHER" id="PTHR46010">
    <property type="entry name" value="PROTEIN IWS1 HOMOLOG"/>
    <property type="match status" value="1"/>
</dbReference>
<dbReference type="PANTHER" id="PTHR46010:SF1">
    <property type="entry name" value="PROTEIN IWS1 HOMOLOG"/>
    <property type="match status" value="1"/>
</dbReference>
<dbReference type="Pfam" id="PF08711">
    <property type="entry name" value="Med26"/>
    <property type="match status" value="1"/>
</dbReference>
<dbReference type="SUPFAM" id="SSF47676">
    <property type="entry name" value="Conserved domain common to transcription factors TFIIS, elongin A, CRSP70"/>
    <property type="match status" value="1"/>
</dbReference>
<dbReference type="PROSITE" id="PS51319">
    <property type="entry name" value="TFIIS_N"/>
    <property type="match status" value="1"/>
</dbReference>
<proteinExistence type="inferred from homology"/>
<name>IWS1_EMENI</name>
<protein>
    <recommendedName>
        <fullName>Transcription factor iws1</fullName>
    </recommendedName>
</protein>
<feature type="chain" id="PRO_0000083359" description="Transcription factor iws1">
    <location>
        <begin position="1"/>
        <end position="469"/>
    </location>
</feature>
<feature type="domain" description="TFIIS N-terminal" evidence="2">
    <location>
        <begin position="284"/>
        <end position="361"/>
    </location>
</feature>
<feature type="region of interest" description="Disordered" evidence="3">
    <location>
        <begin position="1"/>
        <end position="193"/>
    </location>
</feature>
<feature type="region of interest" description="Disordered" evidence="3">
    <location>
        <begin position="444"/>
        <end position="469"/>
    </location>
</feature>
<feature type="compositionally biased region" description="Acidic residues" evidence="3">
    <location>
        <begin position="22"/>
        <end position="34"/>
    </location>
</feature>
<feature type="compositionally biased region" description="Low complexity" evidence="3">
    <location>
        <begin position="66"/>
        <end position="78"/>
    </location>
</feature>
<feature type="compositionally biased region" description="Acidic residues" evidence="3">
    <location>
        <begin position="79"/>
        <end position="110"/>
    </location>
</feature>
<feature type="compositionally biased region" description="Basic residues" evidence="3">
    <location>
        <begin position="142"/>
        <end position="153"/>
    </location>
</feature>
<accession>Q5BEG5</accession>
<accession>C8VTP1</accession>
<reference key="1">
    <citation type="journal article" date="2005" name="Nature">
        <title>Sequencing of Aspergillus nidulans and comparative analysis with A. fumigatus and A. oryzae.</title>
        <authorList>
            <person name="Galagan J.E."/>
            <person name="Calvo S.E."/>
            <person name="Cuomo C."/>
            <person name="Ma L.-J."/>
            <person name="Wortman J.R."/>
            <person name="Batzoglou S."/>
            <person name="Lee S.-I."/>
            <person name="Bastuerkmen M."/>
            <person name="Spevak C.C."/>
            <person name="Clutterbuck J."/>
            <person name="Kapitonov V."/>
            <person name="Jurka J."/>
            <person name="Scazzocchio C."/>
            <person name="Farman M.L."/>
            <person name="Butler J."/>
            <person name="Purcell S."/>
            <person name="Harris S."/>
            <person name="Braus G.H."/>
            <person name="Draht O."/>
            <person name="Busch S."/>
            <person name="D'Enfert C."/>
            <person name="Bouchier C."/>
            <person name="Goldman G.H."/>
            <person name="Bell-Pedersen D."/>
            <person name="Griffiths-Jones S."/>
            <person name="Doonan J.H."/>
            <person name="Yu J."/>
            <person name="Vienken K."/>
            <person name="Pain A."/>
            <person name="Freitag M."/>
            <person name="Selker E.U."/>
            <person name="Archer D.B."/>
            <person name="Penalva M.A."/>
            <person name="Oakley B.R."/>
            <person name="Momany M."/>
            <person name="Tanaka T."/>
            <person name="Kumagai T."/>
            <person name="Asai K."/>
            <person name="Machida M."/>
            <person name="Nierman W.C."/>
            <person name="Denning D.W."/>
            <person name="Caddick M.X."/>
            <person name="Hynes M."/>
            <person name="Paoletti M."/>
            <person name="Fischer R."/>
            <person name="Miller B.L."/>
            <person name="Dyer P.S."/>
            <person name="Sachs M.S."/>
            <person name="Osmani S.A."/>
            <person name="Birren B.W."/>
        </authorList>
    </citation>
    <scope>NUCLEOTIDE SEQUENCE [LARGE SCALE GENOMIC DNA]</scope>
    <source>
        <strain>FGSC A4 / ATCC 38163 / CBS 112.46 / NRRL 194 / M139</strain>
    </source>
</reference>
<reference key="2">
    <citation type="journal article" date="2009" name="Fungal Genet. Biol.">
        <title>The 2008 update of the Aspergillus nidulans genome annotation: a community effort.</title>
        <authorList>
            <person name="Wortman J.R."/>
            <person name="Gilsenan J.M."/>
            <person name="Joardar V."/>
            <person name="Deegan J."/>
            <person name="Clutterbuck J."/>
            <person name="Andersen M.R."/>
            <person name="Archer D."/>
            <person name="Bencina M."/>
            <person name="Braus G."/>
            <person name="Coutinho P."/>
            <person name="von Dohren H."/>
            <person name="Doonan J."/>
            <person name="Driessen A.J."/>
            <person name="Durek P."/>
            <person name="Espeso E."/>
            <person name="Fekete E."/>
            <person name="Flipphi M."/>
            <person name="Estrada C.G."/>
            <person name="Geysens S."/>
            <person name="Goldman G."/>
            <person name="de Groot P.W."/>
            <person name="Hansen K."/>
            <person name="Harris S.D."/>
            <person name="Heinekamp T."/>
            <person name="Helmstaedt K."/>
            <person name="Henrissat B."/>
            <person name="Hofmann G."/>
            <person name="Homan T."/>
            <person name="Horio T."/>
            <person name="Horiuchi H."/>
            <person name="James S."/>
            <person name="Jones M."/>
            <person name="Karaffa L."/>
            <person name="Karanyi Z."/>
            <person name="Kato M."/>
            <person name="Keller N."/>
            <person name="Kelly D.E."/>
            <person name="Kiel J.A."/>
            <person name="Kim J.M."/>
            <person name="van der Klei I.J."/>
            <person name="Klis F.M."/>
            <person name="Kovalchuk A."/>
            <person name="Krasevec N."/>
            <person name="Kubicek C.P."/>
            <person name="Liu B."/>
            <person name="Maccabe A."/>
            <person name="Meyer V."/>
            <person name="Mirabito P."/>
            <person name="Miskei M."/>
            <person name="Mos M."/>
            <person name="Mullins J."/>
            <person name="Nelson D.R."/>
            <person name="Nielsen J."/>
            <person name="Oakley B.R."/>
            <person name="Osmani S.A."/>
            <person name="Pakula T."/>
            <person name="Paszewski A."/>
            <person name="Paulsen I."/>
            <person name="Pilsyk S."/>
            <person name="Pocsi I."/>
            <person name="Punt P.J."/>
            <person name="Ram A.F."/>
            <person name="Ren Q."/>
            <person name="Robellet X."/>
            <person name="Robson G."/>
            <person name="Seiboth B."/>
            <person name="van Solingen P."/>
            <person name="Specht T."/>
            <person name="Sun J."/>
            <person name="Taheri-Talesh N."/>
            <person name="Takeshita N."/>
            <person name="Ussery D."/>
            <person name="vanKuyk P.A."/>
            <person name="Visser H."/>
            <person name="van de Vondervoort P.J."/>
            <person name="de Vries R.P."/>
            <person name="Walton J."/>
            <person name="Xiang X."/>
            <person name="Xiong Y."/>
            <person name="Zeng A.P."/>
            <person name="Brandt B.W."/>
            <person name="Cornell M.J."/>
            <person name="van den Hondel C.A."/>
            <person name="Visser J."/>
            <person name="Oliver S.G."/>
            <person name="Turner G."/>
        </authorList>
    </citation>
    <scope>GENOME REANNOTATION</scope>
    <source>
        <strain>FGSC A4 / ATCC 38163 / CBS 112.46 / NRRL 194 / M139</strain>
    </source>
</reference>
<comment type="function">
    <text evidence="1">Transcription factor involved in RNA polymerase II transcription regulation. May function in both SPT15/TBP post-recruitment and recruitment steps of transcription (By similarity).</text>
</comment>
<comment type="subcellular location">
    <subcellularLocation>
        <location evidence="2">Nucleus</location>
    </subcellularLocation>
</comment>
<comment type="similarity">
    <text evidence="4">Belongs to the IWS1 family.</text>
</comment>
<comment type="sequence caution" evidence="4">
    <conflict type="erroneous gene model prediction">
        <sequence resource="EMBL-CDS" id="EAA66183"/>
    </conflict>
</comment>
<sequence>MSASPSRSPESKPAGNTPPIDVDVENEQNVDAEEAVQPPTPGAGGDDADADDNDAKPAVDNEIDNDNTNLNENEGQNELNEDNLGDSDDESILSEVDEAQFEDFDPENVDIEDRPQLDIDEENLKLIGRHKRKRTEEEGTSKRKKEGRRRKSRRYAEEEEGGSDREAGGKRRKSKKAELEEDEETLDPATRRRRALDRAMDEALKKPTKRRARKQDGIDLEQMADAEIEDMRKRMTHAAQMDAINRREGKPAMHKLKMLPEVVSLLNRNQYVNSLVDPEINLLEAVKFFLEPLDDGSLPAYNIQRDLMTALGKLPINKETLIASGIGKVVVFYTRSKRPEPGIKRMAERLLAEWTRPILQRSDDYSKRVYQEAEFDPTYVLSPFLLKITSRVKSVQDSAAEARARELLPPRLANRARAEISHTSYTVVPKPTVVQESKFARPLGASGEDRFRKMRARQIAATKGQGARR</sequence>
<evidence type="ECO:0000250" key="1"/>
<evidence type="ECO:0000255" key="2">
    <source>
        <dbReference type="PROSITE-ProRule" id="PRU00649"/>
    </source>
</evidence>
<evidence type="ECO:0000256" key="3">
    <source>
        <dbReference type="SAM" id="MobiDB-lite"/>
    </source>
</evidence>
<evidence type="ECO:0000305" key="4"/>